<name>UGDH1_SOYBN</name>
<keyword id="KW-0520">NAD</keyword>
<keyword id="KW-0560">Oxidoreductase</keyword>
<keyword id="KW-0597">Phosphoprotein</keyword>
<keyword id="KW-1185">Reference proteome</keyword>
<reference key="1">
    <citation type="journal article" date="1996" name="Plant Physiol.">
        <title>Cloning of an enzyme that synthesizes a key nucleotide-sugar precursor of hemicellulose biosynthesis from soybean: UDP-glucose dehydrogenase.</title>
        <authorList>
            <person name="Tenhaken R."/>
            <person name="Thulke O."/>
        </authorList>
    </citation>
    <scope>NUCLEOTIDE SEQUENCE [MRNA]</scope>
    <scope>FUNCTION</scope>
    <source>
        <strain>cv. Williams 82</strain>
    </source>
</reference>
<reference key="2">
    <citation type="journal article" date="2007" name="J. Exp. Bot.">
        <title>Genome-wide analysis of the UDP-glucose dehydrogenase gene family in Arabidopsis, a key enzyme for matrix polysaccharides in cell walls.</title>
        <authorList>
            <person name="Klinghammer M."/>
            <person name="Tenhaken R."/>
        </authorList>
    </citation>
    <scope>GENE FAMILY</scope>
    <scope>NOMENCLATURE</scope>
</reference>
<accession>Q96558</accession>
<dbReference type="EC" id="1.1.1.22"/>
<dbReference type="EMBL" id="U53418">
    <property type="protein sequence ID" value="AAB58398.1"/>
    <property type="molecule type" value="mRNA"/>
</dbReference>
<dbReference type="PIR" id="T08818">
    <property type="entry name" value="T08818"/>
</dbReference>
<dbReference type="RefSeq" id="NP_001238410.1">
    <property type="nucleotide sequence ID" value="NM_001251481.2"/>
</dbReference>
<dbReference type="RefSeq" id="XP_006584641.1">
    <property type="nucleotide sequence ID" value="XM_006584578.2"/>
</dbReference>
<dbReference type="SMR" id="Q96558"/>
<dbReference type="FunCoup" id="Q96558">
    <property type="interactions" value="4936"/>
</dbReference>
<dbReference type="STRING" id="3847.Q96558"/>
<dbReference type="PaxDb" id="3847-GLYMA08G26520.1"/>
<dbReference type="ProMEX" id="Q96558"/>
<dbReference type="EnsemblPlants" id="KRH44990">
    <property type="protein sequence ID" value="KRH44990"/>
    <property type="gene ID" value="GLYMA_08G243000"/>
</dbReference>
<dbReference type="GeneID" id="548074"/>
<dbReference type="Gramene" id="KRH44990">
    <property type="protein sequence ID" value="KRH44990"/>
    <property type="gene ID" value="GLYMA_08G243000"/>
</dbReference>
<dbReference type="KEGG" id="gmx:548074"/>
<dbReference type="eggNOG" id="KOG2666">
    <property type="taxonomic scope" value="Eukaryota"/>
</dbReference>
<dbReference type="HOGENOM" id="CLU_023810_7_0_1"/>
<dbReference type="InParanoid" id="Q96558"/>
<dbReference type="OMA" id="YFFKSRV"/>
<dbReference type="OrthoDB" id="5059218at2759"/>
<dbReference type="UniPathway" id="UPA00038">
    <property type="reaction ID" value="UER00491"/>
</dbReference>
<dbReference type="Proteomes" id="UP000008827">
    <property type="component" value="Chromosome 8"/>
</dbReference>
<dbReference type="GO" id="GO:0005634">
    <property type="term" value="C:nucleus"/>
    <property type="evidence" value="ECO:0000318"/>
    <property type="project" value="GO_Central"/>
</dbReference>
<dbReference type="GO" id="GO:0051287">
    <property type="term" value="F:NAD binding"/>
    <property type="evidence" value="ECO:0007669"/>
    <property type="project" value="InterPro"/>
</dbReference>
<dbReference type="GO" id="GO:0003979">
    <property type="term" value="F:UDP-glucose 6-dehydrogenase activity"/>
    <property type="evidence" value="ECO:0007669"/>
    <property type="project" value="UniProtKB-EC"/>
</dbReference>
<dbReference type="GO" id="GO:0006024">
    <property type="term" value="P:glycosaminoglycan biosynthetic process"/>
    <property type="evidence" value="ECO:0000318"/>
    <property type="project" value="GO_Central"/>
</dbReference>
<dbReference type="GO" id="GO:0006065">
    <property type="term" value="P:UDP-glucuronate biosynthetic process"/>
    <property type="evidence" value="ECO:0007669"/>
    <property type="project" value="UniProtKB-UniPathway"/>
</dbReference>
<dbReference type="FunFam" id="1.20.5.100:FF:000001">
    <property type="entry name" value="UDP-glucose 6-dehydrogenase"/>
    <property type="match status" value="1"/>
</dbReference>
<dbReference type="FunFam" id="3.40.50.720:FF:000032">
    <property type="entry name" value="UDP-glucose 6-dehydrogenase"/>
    <property type="match status" value="1"/>
</dbReference>
<dbReference type="FunFam" id="3.40.50.720:FF:000089">
    <property type="entry name" value="UDP-glucose 6-dehydrogenase"/>
    <property type="match status" value="1"/>
</dbReference>
<dbReference type="Gene3D" id="1.20.5.100">
    <property type="entry name" value="Cytochrome c1, transmembrane anchor, C-terminal"/>
    <property type="match status" value="1"/>
</dbReference>
<dbReference type="Gene3D" id="3.40.50.720">
    <property type="entry name" value="NAD(P)-binding Rossmann-like Domain"/>
    <property type="match status" value="2"/>
</dbReference>
<dbReference type="InterPro" id="IPR008927">
    <property type="entry name" value="6-PGluconate_DH-like_C_sf"/>
</dbReference>
<dbReference type="InterPro" id="IPR036291">
    <property type="entry name" value="NAD(P)-bd_dom_sf"/>
</dbReference>
<dbReference type="InterPro" id="IPR017476">
    <property type="entry name" value="UDP-Glc/GDP-Man"/>
</dbReference>
<dbReference type="InterPro" id="IPR014027">
    <property type="entry name" value="UDP-Glc/GDP-Man_DH_C"/>
</dbReference>
<dbReference type="InterPro" id="IPR036220">
    <property type="entry name" value="UDP-Glc/GDP-Man_DH_C_sf"/>
</dbReference>
<dbReference type="InterPro" id="IPR014026">
    <property type="entry name" value="UDP-Glc/GDP-Man_DH_dimer"/>
</dbReference>
<dbReference type="InterPro" id="IPR001732">
    <property type="entry name" value="UDP-Glc/GDP-Man_DH_N"/>
</dbReference>
<dbReference type="InterPro" id="IPR028356">
    <property type="entry name" value="UDPglc_DH_euk"/>
</dbReference>
<dbReference type="NCBIfam" id="TIGR03026">
    <property type="entry name" value="NDP-sugDHase"/>
    <property type="match status" value="1"/>
</dbReference>
<dbReference type="PANTHER" id="PTHR11374:SF64">
    <property type="entry name" value="UDP-GLUCOSE 6-DEHYDROGENASE 2"/>
    <property type="match status" value="1"/>
</dbReference>
<dbReference type="PANTHER" id="PTHR11374">
    <property type="entry name" value="UDP-GLUCOSE DEHYDROGENASE/UDP-MANNAC DEHYDROGENASE"/>
    <property type="match status" value="1"/>
</dbReference>
<dbReference type="Pfam" id="PF00984">
    <property type="entry name" value="UDPG_MGDP_dh"/>
    <property type="match status" value="1"/>
</dbReference>
<dbReference type="Pfam" id="PF03720">
    <property type="entry name" value="UDPG_MGDP_dh_C"/>
    <property type="match status" value="1"/>
</dbReference>
<dbReference type="Pfam" id="PF03721">
    <property type="entry name" value="UDPG_MGDP_dh_N"/>
    <property type="match status" value="1"/>
</dbReference>
<dbReference type="PIRSF" id="PIRSF500133">
    <property type="entry name" value="UDPglc_DH_euk"/>
    <property type="match status" value="1"/>
</dbReference>
<dbReference type="PIRSF" id="PIRSF000124">
    <property type="entry name" value="UDPglc_GDPman_dh"/>
    <property type="match status" value="1"/>
</dbReference>
<dbReference type="SMART" id="SM00984">
    <property type="entry name" value="UDPG_MGDP_dh_C"/>
    <property type="match status" value="1"/>
</dbReference>
<dbReference type="SUPFAM" id="SSF48179">
    <property type="entry name" value="6-phosphogluconate dehydrogenase C-terminal domain-like"/>
    <property type="match status" value="1"/>
</dbReference>
<dbReference type="SUPFAM" id="SSF51735">
    <property type="entry name" value="NAD(P)-binding Rossmann-fold domains"/>
    <property type="match status" value="1"/>
</dbReference>
<dbReference type="SUPFAM" id="SSF52413">
    <property type="entry name" value="UDP-glucose/GDP-mannose dehydrogenase C-terminal domain"/>
    <property type="match status" value="1"/>
</dbReference>
<protein>
    <recommendedName>
        <fullName>UDP-glucose 6-dehydrogenase 1</fullName>
        <shortName>UDP-Glc dehydrogenase 1</shortName>
        <shortName>UDP-GlcDH 1</shortName>
        <shortName>UDPGDH 1</shortName>
        <ecNumber>1.1.1.22</ecNumber>
    </recommendedName>
    <alternativeName>
        <fullName>Gm-UGD1</fullName>
    </alternativeName>
</protein>
<gene>
    <name type="primary">UGD1</name>
</gene>
<sequence length="480" mass="52942">MVKICCIGAGYVGGPTMAVIALKCPSIEVAVVDISKSRIAAWNSDQLPIYEPGLDGVVKQCRGKNLFFSTDVEKHVFEADIVFVSVNTPTKTQGLGAGKAADLTYWESAARMIADVSKSDKIVVEKSTVPVKTAEAIEKILTHNSKGIKFQILSNPEFLAEGTAIKDLFNPDRVLIGGRETPEGQKAIQTLKDVYAQWVPEERILTTNLWSAELSKLAANAFLAQRISSVNAMSALCEATGANVQQVSYSVGTDSRIGPKFLNASVGFGGSCFQKDILNLVYICECNGLPEVAEYWKQVIKINDYQKSRFVNRVVASMFNTVSNKKIAILGFAFKKDTGDTRETPAIDVCQGLLGDKANLSIYDPQVTEDQIQRDLSMNKFDWDHPIHLQPTSPTTVKKVSVVWDAYEATKDAHGLCILTEWDEFKTLDYQKIFDNMQKPAFVFDGRNIVDADKLREIGFIVYSIGKPLDPWLKDMPAVA</sequence>
<feature type="chain" id="PRO_0000074065" description="UDP-glucose 6-dehydrogenase 1">
    <location>
        <begin position="1"/>
        <end position="480"/>
    </location>
</feature>
<feature type="active site" description="Nucleophile" evidence="1">
    <location>
        <position position="272"/>
    </location>
</feature>
<feature type="binding site" evidence="1">
    <location>
        <begin position="8"/>
        <end position="13"/>
    </location>
    <ligand>
        <name>NAD(+)</name>
        <dbReference type="ChEBI" id="CHEBI:57540"/>
    </ligand>
</feature>
<feature type="binding site" evidence="1">
    <location>
        <position position="33"/>
    </location>
    <ligand>
        <name>NAD(+)</name>
        <dbReference type="ChEBI" id="CHEBI:57540"/>
    </ligand>
</feature>
<feature type="binding site" evidence="1">
    <location>
        <position position="38"/>
    </location>
    <ligand>
        <name>NAD(+)</name>
        <dbReference type="ChEBI" id="CHEBI:57540"/>
    </ligand>
</feature>
<feature type="binding site" evidence="1">
    <location>
        <begin position="86"/>
        <end position="90"/>
    </location>
    <ligand>
        <name>NAD(+)</name>
        <dbReference type="ChEBI" id="CHEBI:57540"/>
    </ligand>
</feature>
<feature type="binding site" evidence="1">
    <location>
        <begin position="127"/>
        <end position="128"/>
    </location>
    <ligand>
        <name>NAD(+)</name>
        <dbReference type="ChEBI" id="CHEBI:57540"/>
    </ligand>
</feature>
<feature type="binding site" evidence="1">
    <location>
        <begin position="157"/>
        <end position="161"/>
    </location>
    <ligand>
        <name>substrate</name>
    </ligand>
</feature>
<feature type="binding site" evidence="1">
    <location>
        <position position="161"/>
    </location>
    <ligand>
        <name>NAD(+)</name>
        <dbReference type="ChEBI" id="CHEBI:57540"/>
    </ligand>
</feature>
<feature type="binding site" evidence="1">
    <location>
        <begin position="216"/>
        <end position="223"/>
    </location>
    <ligand>
        <name>substrate</name>
    </ligand>
</feature>
<feature type="binding site" evidence="1">
    <location>
        <begin position="256"/>
        <end position="269"/>
    </location>
    <ligand>
        <name>substrate</name>
    </ligand>
</feature>
<feature type="binding site" evidence="1">
    <location>
        <begin position="272"/>
        <end position="275"/>
    </location>
    <ligand>
        <name>NAD(+)</name>
        <dbReference type="ChEBI" id="CHEBI:57540"/>
    </ligand>
</feature>
<feature type="binding site" evidence="1">
    <location>
        <begin position="334"/>
        <end position="335"/>
    </location>
    <ligand>
        <name>substrate</name>
    </ligand>
</feature>
<feature type="binding site" evidence="1">
    <location>
        <position position="342"/>
    </location>
    <ligand>
        <name>NAD(+)</name>
        <dbReference type="ChEBI" id="CHEBI:57540"/>
    </ligand>
</feature>
<feature type="binding site" evidence="1">
    <location>
        <position position="447"/>
    </location>
    <ligand>
        <name>substrate</name>
    </ligand>
</feature>
<feature type="modified residue" description="Phosphoserine" evidence="1">
    <location>
        <position position="393"/>
    </location>
</feature>
<comment type="function">
    <text evidence="2">Involved in the biosynthesis of UDP-glucuronic acid (UDP-GlcA), providing nucleotide sugars for cell-wall polymers.</text>
</comment>
<comment type="catalytic activity">
    <reaction>
        <text>UDP-alpha-D-glucose + 2 NAD(+) + H2O = UDP-alpha-D-glucuronate + 2 NADH + 3 H(+)</text>
        <dbReference type="Rhea" id="RHEA:23596"/>
        <dbReference type="ChEBI" id="CHEBI:15377"/>
        <dbReference type="ChEBI" id="CHEBI:15378"/>
        <dbReference type="ChEBI" id="CHEBI:57540"/>
        <dbReference type="ChEBI" id="CHEBI:57945"/>
        <dbReference type="ChEBI" id="CHEBI:58052"/>
        <dbReference type="ChEBI" id="CHEBI:58885"/>
        <dbReference type="EC" id="1.1.1.22"/>
    </reaction>
</comment>
<comment type="pathway">
    <text>Nucleotide-sugar biosynthesis; UDP-alpha-D-glucuronate biosynthesis; UDP-alpha-D-glucuronate from UDP-alpha-D-glucose: step 1/1.</text>
</comment>
<comment type="similarity">
    <text evidence="3">Belongs to the UDP-glucose/GDP-mannose dehydrogenase family.</text>
</comment>
<organism>
    <name type="scientific">Glycine max</name>
    <name type="common">Soybean</name>
    <name type="synonym">Glycine hispida</name>
    <dbReference type="NCBI Taxonomy" id="3847"/>
    <lineage>
        <taxon>Eukaryota</taxon>
        <taxon>Viridiplantae</taxon>
        <taxon>Streptophyta</taxon>
        <taxon>Embryophyta</taxon>
        <taxon>Tracheophyta</taxon>
        <taxon>Spermatophyta</taxon>
        <taxon>Magnoliopsida</taxon>
        <taxon>eudicotyledons</taxon>
        <taxon>Gunneridae</taxon>
        <taxon>Pentapetalae</taxon>
        <taxon>rosids</taxon>
        <taxon>fabids</taxon>
        <taxon>Fabales</taxon>
        <taxon>Fabaceae</taxon>
        <taxon>Papilionoideae</taxon>
        <taxon>50 kb inversion clade</taxon>
        <taxon>NPAAA clade</taxon>
        <taxon>indigoferoid/millettioid clade</taxon>
        <taxon>Phaseoleae</taxon>
        <taxon>Glycine</taxon>
        <taxon>Glycine subgen. Soja</taxon>
    </lineage>
</organism>
<evidence type="ECO:0000250" key="1"/>
<evidence type="ECO:0000269" key="2">
    <source>
    </source>
</evidence>
<evidence type="ECO:0000305" key="3"/>
<proteinExistence type="evidence at transcript level"/>